<reference key="1">
    <citation type="submission" date="2008-04" db="EMBL/GenBank/DDBJ databases">
        <title>Complete sequence of Yersinia pseudotuberculosis PB1/+.</title>
        <authorList>
            <person name="Copeland A."/>
            <person name="Lucas S."/>
            <person name="Lapidus A."/>
            <person name="Glavina del Rio T."/>
            <person name="Dalin E."/>
            <person name="Tice H."/>
            <person name="Bruce D."/>
            <person name="Goodwin L."/>
            <person name="Pitluck S."/>
            <person name="Munk A.C."/>
            <person name="Brettin T."/>
            <person name="Detter J.C."/>
            <person name="Han C."/>
            <person name="Tapia R."/>
            <person name="Schmutz J."/>
            <person name="Larimer F."/>
            <person name="Land M."/>
            <person name="Hauser L."/>
            <person name="Challacombe J.F."/>
            <person name="Green L."/>
            <person name="Lindler L.E."/>
            <person name="Nikolich M.P."/>
            <person name="Richardson P."/>
        </authorList>
    </citation>
    <scope>NUCLEOTIDE SEQUENCE [LARGE SCALE GENOMIC DNA]</scope>
    <source>
        <strain>PB1/+</strain>
    </source>
</reference>
<name>RNB_YERPB</name>
<evidence type="ECO:0000255" key="1"/>
<evidence type="ECO:0000255" key="2">
    <source>
        <dbReference type="HAMAP-Rule" id="MF_01036"/>
    </source>
</evidence>
<sequence length="644" mass="72961">MFQDNPLLAQLKQQLHTQTPRVEGVVKGTEKGFGFLEVDGQKSYFIPPPQMKKVMHGDRIIATLHTDKDREIAEPETLVEPFLSRFVGRVQRKDDRLSIVPDHPLLRDAIQCRPVRELTHSFQNGDWVVAEMCRHPLKGDRAFQADLTAFITNGEDHFVPWWVTLARHNLEREAPAMVESALNDAELEREDLTALNFVTIDSASTEDMDDALFVQDNGDGSWLLTIAIADPTAYVVENSELDLTARKRAFTNYLPGFNIPMLPRDLSDNLCSLRPNERRPVLVCRVTITEEGTLSNDIRFSAAWVESKAKLVYDDVSDWLEGNNRWQPQDTAIAEQITLLKRICDARSNWRQQHALVFKDRPDYRFLLGEKGEVLDIIVEHRRIANRIVEECMIAANVCAALALREHLGFGIYNVHTGFDPALVEQAASVLKANGVDADPQALLTLPGFCELRRHLDALPTQFLDSRIRRFQTFAEISTVPGPHFGLGLEAYATWTSPIRKYGDMVNHRLLKAMITGQQAEKPQEEITVQLAERRRLNRMAERDVGDWLYARYLQPQAGTDTRFTAEIIDITRGGLRVRLLDNGAVAFIPAPFIHAVRDEVVCSQETGTVQIKGETVYSQSDKIEVRIAEVRMETRNVIARPVA</sequence>
<protein>
    <recommendedName>
        <fullName evidence="2">Exoribonuclease 2</fullName>
        <ecNumber evidence="2">3.1.13.1</ecNumber>
    </recommendedName>
    <alternativeName>
        <fullName evidence="2">Exoribonuclease II</fullName>
        <shortName evidence="2">RNase II</shortName>
        <shortName evidence="2">Ribonuclease II</shortName>
    </alternativeName>
</protein>
<dbReference type="EC" id="3.1.13.1" evidence="2"/>
<dbReference type="EMBL" id="CP001048">
    <property type="protein sequence ID" value="ACC89188.1"/>
    <property type="molecule type" value="Genomic_DNA"/>
</dbReference>
<dbReference type="RefSeq" id="WP_011192452.1">
    <property type="nucleotide sequence ID" value="NZ_CP009780.1"/>
</dbReference>
<dbReference type="SMR" id="B2K4J2"/>
<dbReference type="KEGG" id="ypb:YPTS_2227"/>
<dbReference type="PATRIC" id="fig|502801.10.peg.1619"/>
<dbReference type="GO" id="GO:0005829">
    <property type="term" value="C:cytosol"/>
    <property type="evidence" value="ECO:0007669"/>
    <property type="project" value="TreeGrafter"/>
</dbReference>
<dbReference type="GO" id="GO:0008859">
    <property type="term" value="F:exoribonuclease II activity"/>
    <property type="evidence" value="ECO:0007669"/>
    <property type="project" value="UniProtKB-UniRule"/>
</dbReference>
<dbReference type="GO" id="GO:0003723">
    <property type="term" value="F:RNA binding"/>
    <property type="evidence" value="ECO:0007669"/>
    <property type="project" value="UniProtKB-KW"/>
</dbReference>
<dbReference type="GO" id="GO:0006402">
    <property type="term" value="P:mRNA catabolic process"/>
    <property type="evidence" value="ECO:0007669"/>
    <property type="project" value="UniProtKB-UniRule"/>
</dbReference>
<dbReference type="FunFam" id="2.40.50.140:FF:000079">
    <property type="entry name" value="Exoribonuclease 2"/>
    <property type="match status" value="1"/>
</dbReference>
<dbReference type="Gene3D" id="2.40.50.640">
    <property type="match status" value="1"/>
</dbReference>
<dbReference type="Gene3D" id="2.40.50.140">
    <property type="entry name" value="Nucleic acid-binding proteins"/>
    <property type="match status" value="2"/>
</dbReference>
<dbReference type="HAMAP" id="MF_01036">
    <property type="entry name" value="RNase_II"/>
    <property type="match status" value="1"/>
</dbReference>
<dbReference type="InterPro" id="IPR011129">
    <property type="entry name" value="CSD"/>
</dbReference>
<dbReference type="InterPro" id="IPR012340">
    <property type="entry name" value="NA-bd_OB-fold"/>
</dbReference>
<dbReference type="InterPro" id="IPR013223">
    <property type="entry name" value="RNase_B_OB_dom"/>
</dbReference>
<dbReference type="InterPro" id="IPR011804">
    <property type="entry name" value="RNase_II"/>
</dbReference>
<dbReference type="InterPro" id="IPR001900">
    <property type="entry name" value="RNase_II/R"/>
</dbReference>
<dbReference type="InterPro" id="IPR022966">
    <property type="entry name" value="RNase_II/R_CS"/>
</dbReference>
<dbReference type="InterPro" id="IPR004476">
    <property type="entry name" value="RNase_II/RNase_R"/>
</dbReference>
<dbReference type="InterPro" id="IPR050180">
    <property type="entry name" value="RNR_Ribonuclease"/>
</dbReference>
<dbReference type="InterPro" id="IPR003029">
    <property type="entry name" value="S1_domain"/>
</dbReference>
<dbReference type="NCBIfam" id="TIGR00358">
    <property type="entry name" value="3_prime_RNase"/>
    <property type="match status" value="1"/>
</dbReference>
<dbReference type="NCBIfam" id="NF003455">
    <property type="entry name" value="PRK05054.1"/>
    <property type="match status" value="1"/>
</dbReference>
<dbReference type="NCBIfam" id="TIGR02062">
    <property type="entry name" value="RNase_B"/>
    <property type="match status" value="1"/>
</dbReference>
<dbReference type="PANTHER" id="PTHR23355:SF37">
    <property type="entry name" value="EXORIBONUCLEASE 2"/>
    <property type="match status" value="1"/>
</dbReference>
<dbReference type="PANTHER" id="PTHR23355">
    <property type="entry name" value="RIBONUCLEASE"/>
    <property type="match status" value="1"/>
</dbReference>
<dbReference type="Pfam" id="PF08206">
    <property type="entry name" value="OB_RNB"/>
    <property type="match status" value="1"/>
</dbReference>
<dbReference type="Pfam" id="PF00773">
    <property type="entry name" value="RNB"/>
    <property type="match status" value="1"/>
</dbReference>
<dbReference type="Pfam" id="PF00575">
    <property type="entry name" value="S1"/>
    <property type="match status" value="1"/>
</dbReference>
<dbReference type="SMART" id="SM00357">
    <property type="entry name" value="CSP"/>
    <property type="match status" value="1"/>
</dbReference>
<dbReference type="SMART" id="SM00955">
    <property type="entry name" value="RNB"/>
    <property type="match status" value="1"/>
</dbReference>
<dbReference type="SUPFAM" id="SSF50249">
    <property type="entry name" value="Nucleic acid-binding proteins"/>
    <property type="match status" value="4"/>
</dbReference>
<dbReference type="PROSITE" id="PS01175">
    <property type="entry name" value="RIBONUCLEASE_II"/>
    <property type="match status" value="1"/>
</dbReference>
<accession>B2K4J2</accession>
<proteinExistence type="inferred from homology"/>
<keyword id="KW-0963">Cytoplasm</keyword>
<keyword id="KW-0269">Exonuclease</keyword>
<keyword id="KW-0378">Hydrolase</keyword>
<keyword id="KW-0540">Nuclease</keyword>
<keyword id="KW-0694">RNA-binding</keyword>
<feature type="chain" id="PRO_1000135882" description="Exoribonuclease 2">
    <location>
        <begin position="1"/>
        <end position="644"/>
    </location>
</feature>
<feature type="domain" description="RNB" evidence="1">
    <location>
        <begin position="189"/>
        <end position="516"/>
    </location>
</feature>
<feature type="domain" description="S1 motif" evidence="2">
    <location>
        <begin position="561"/>
        <end position="643"/>
    </location>
</feature>
<organism>
    <name type="scientific">Yersinia pseudotuberculosis serotype IB (strain PB1/+)</name>
    <dbReference type="NCBI Taxonomy" id="502801"/>
    <lineage>
        <taxon>Bacteria</taxon>
        <taxon>Pseudomonadati</taxon>
        <taxon>Pseudomonadota</taxon>
        <taxon>Gammaproteobacteria</taxon>
        <taxon>Enterobacterales</taxon>
        <taxon>Yersiniaceae</taxon>
        <taxon>Yersinia</taxon>
    </lineage>
</organism>
<gene>
    <name evidence="2" type="primary">rnb</name>
    <name type="ordered locus">YPTS_2227</name>
</gene>
<comment type="function">
    <text evidence="2">Involved in mRNA degradation. Hydrolyzes single-stranded polyribonucleotides processively in the 3' to 5' direction.</text>
</comment>
<comment type="catalytic activity">
    <reaction evidence="2">
        <text>Exonucleolytic cleavage in the 3'- to 5'-direction to yield nucleoside 5'-phosphates.</text>
        <dbReference type="EC" id="3.1.13.1"/>
    </reaction>
</comment>
<comment type="subcellular location">
    <subcellularLocation>
        <location evidence="2">Cytoplasm</location>
    </subcellularLocation>
</comment>
<comment type="similarity">
    <text evidence="2">Belongs to the RNR ribonuclease family. RNase II subfamily.</text>
</comment>